<proteinExistence type="inferred from homology"/>
<name>RUVB_TREDE</name>
<keyword id="KW-0067">ATP-binding</keyword>
<keyword id="KW-0963">Cytoplasm</keyword>
<keyword id="KW-0227">DNA damage</keyword>
<keyword id="KW-0233">DNA recombination</keyword>
<keyword id="KW-0234">DNA repair</keyword>
<keyword id="KW-0238">DNA-binding</keyword>
<keyword id="KW-0378">Hydrolase</keyword>
<keyword id="KW-0547">Nucleotide-binding</keyword>
<keyword id="KW-1185">Reference proteome</keyword>
<gene>
    <name evidence="1" type="primary">ruvB</name>
    <name type="ordered locus">TDE_1914</name>
</gene>
<evidence type="ECO:0000255" key="1">
    <source>
        <dbReference type="HAMAP-Rule" id="MF_00016"/>
    </source>
</evidence>
<evidence type="ECO:0000256" key="2">
    <source>
        <dbReference type="SAM" id="MobiDB-lite"/>
    </source>
</evidence>
<accession>P61538</accession>
<feature type="chain" id="PRO_0000165622" description="Holliday junction branch migration complex subunit RuvB">
    <location>
        <begin position="1"/>
        <end position="343"/>
    </location>
</feature>
<feature type="region of interest" description="Large ATPase domain (RuvB-L)" evidence="1">
    <location>
        <begin position="1"/>
        <end position="183"/>
    </location>
</feature>
<feature type="region of interest" description="Disordered" evidence="2">
    <location>
        <begin position="1"/>
        <end position="23"/>
    </location>
</feature>
<feature type="region of interest" description="Small ATPAse domain (RuvB-S)" evidence="1">
    <location>
        <begin position="184"/>
        <end position="254"/>
    </location>
</feature>
<feature type="region of interest" description="Head domain (RuvB-H)" evidence="1">
    <location>
        <begin position="257"/>
        <end position="343"/>
    </location>
</feature>
<feature type="binding site" evidence="1">
    <location>
        <position position="22"/>
    </location>
    <ligand>
        <name>ATP</name>
        <dbReference type="ChEBI" id="CHEBI:30616"/>
    </ligand>
</feature>
<feature type="binding site" evidence="1">
    <location>
        <position position="23"/>
    </location>
    <ligand>
        <name>ATP</name>
        <dbReference type="ChEBI" id="CHEBI:30616"/>
    </ligand>
</feature>
<feature type="binding site" evidence="1">
    <location>
        <position position="64"/>
    </location>
    <ligand>
        <name>ATP</name>
        <dbReference type="ChEBI" id="CHEBI:30616"/>
    </ligand>
</feature>
<feature type="binding site" evidence="1">
    <location>
        <position position="67"/>
    </location>
    <ligand>
        <name>ATP</name>
        <dbReference type="ChEBI" id="CHEBI:30616"/>
    </ligand>
</feature>
<feature type="binding site" evidence="1">
    <location>
        <position position="68"/>
    </location>
    <ligand>
        <name>ATP</name>
        <dbReference type="ChEBI" id="CHEBI:30616"/>
    </ligand>
</feature>
<feature type="binding site" evidence="1">
    <location>
        <position position="68"/>
    </location>
    <ligand>
        <name>Mg(2+)</name>
        <dbReference type="ChEBI" id="CHEBI:18420"/>
    </ligand>
</feature>
<feature type="binding site" evidence="1">
    <location>
        <position position="69"/>
    </location>
    <ligand>
        <name>ATP</name>
        <dbReference type="ChEBI" id="CHEBI:30616"/>
    </ligand>
</feature>
<feature type="binding site" evidence="1">
    <location>
        <begin position="130"/>
        <end position="132"/>
    </location>
    <ligand>
        <name>ATP</name>
        <dbReference type="ChEBI" id="CHEBI:30616"/>
    </ligand>
</feature>
<feature type="binding site" evidence="1">
    <location>
        <position position="173"/>
    </location>
    <ligand>
        <name>ATP</name>
        <dbReference type="ChEBI" id="CHEBI:30616"/>
    </ligand>
</feature>
<feature type="binding site" evidence="1">
    <location>
        <position position="183"/>
    </location>
    <ligand>
        <name>ATP</name>
        <dbReference type="ChEBI" id="CHEBI:30616"/>
    </ligand>
</feature>
<feature type="binding site" evidence="1">
    <location>
        <position position="220"/>
    </location>
    <ligand>
        <name>ATP</name>
        <dbReference type="ChEBI" id="CHEBI:30616"/>
    </ligand>
</feature>
<feature type="binding site" evidence="1">
    <location>
        <position position="312"/>
    </location>
    <ligand>
        <name>DNA</name>
        <dbReference type="ChEBI" id="CHEBI:16991"/>
    </ligand>
</feature>
<feature type="binding site" evidence="1">
    <location>
        <position position="317"/>
    </location>
    <ligand>
        <name>DNA</name>
        <dbReference type="ChEBI" id="CHEBI:16991"/>
    </ligand>
</feature>
<dbReference type="EC" id="3.6.4.-" evidence="1"/>
<dbReference type="EMBL" id="AE017226">
    <property type="protein sequence ID" value="AAS12428.1"/>
    <property type="molecule type" value="Genomic_DNA"/>
</dbReference>
<dbReference type="RefSeq" id="NP_972517.1">
    <property type="nucleotide sequence ID" value="NC_002967.9"/>
</dbReference>
<dbReference type="RefSeq" id="WP_002679608.1">
    <property type="nucleotide sequence ID" value="NC_002967.9"/>
</dbReference>
<dbReference type="SMR" id="P61538"/>
<dbReference type="STRING" id="243275.TDE_1914"/>
<dbReference type="PaxDb" id="243275-TDE_1914"/>
<dbReference type="GeneID" id="2740412"/>
<dbReference type="KEGG" id="tde:TDE_1914"/>
<dbReference type="PATRIC" id="fig|243275.7.peg.1811"/>
<dbReference type="eggNOG" id="COG2255">
    <property type="taxonomic scope" value="Bacteria"/>
</dbReference>
<dbReference type="HOGENOM" id="CLU_055599_1_0_12"/>
<dbReference type="OrthoDB" id="9804478at2"/>
<dbReference type="Proteomes" id="UP000008212">
    <property type="component" value="Chromosome"/>
</dbReference>
<dbReference type="GO" id="GO:0005737">
    <property type="term" value="C:cytoplasm"/>
    <property type="evidence" value="ECO:0007669"/>
    <property type="project" value="UniProtKB-SubCell"/>
</dbReference>
<dbReference type="GO" id="GO:0048476">
    <property type="term" value="C:Holliday junction resolvase complex"/>
    <property type="evidence" value="ECO:0007669"/>
    <property type="project" value="UniProtKB-UniRule"/>
</dbReference>
<dbReference type="GO" id="GO:0005524">
    <property type="term" value="F:ATP binding"/>
    <property type="evidence" value="ECO:0007669"/>
    <property type="project" value="UniProtKB-UniRule"/>
</dbReference>
<dbReference type="GO" id="GO:0016887">
    <property type="term" value="F:ATP hydrolysis activity"/>
    <property type="evidence" value="ECO:0007669"/>
    <property type="project" value="InterPro"/>
</dbReference>
<dbReference type="GO" id="GO:0000400">
    <property type="term" value="F:four-way junction DNA binding"/>
    <property type="evidence" value="ECO:0007669"/>
    <property type="project" value="UniProtKB-UniRule"/>
</dbReference>
<dbReference type="GO" id="GO:0009378">
    <property type="term" value="F:four-way junction helicase activity"/>
    <property type="evidence" value="ECO:0007669"/>
    <property type="project" value="InterPro"/>
</dbReference>
<dbReference type="GO" id="GO:0006310">
    <property type="term" value="P:DNA recombination"/>
    <property type="evidence" value="ECO:0007669"/>
    <property type="project" value="UniProtKB-UniRule"/>
</dbReference>
<dbReference type="GO" id="GO:0006281">
    <property type="term" value="P:DNA repair"/>
    <property type="evidence" value="ECO:0007669"/>
    <property type="project" value="UniProtKB-UniRule"/>
</dbReference>
<dbReference type="CDD" id="cd00009">
    <property type="entry name" value="AAA"/>
    <property type="match status" value="1"/>
</dbReference>
<dbReference type="Gene3D" id="1.10.8.60">
    <property type="match status" value="1"/>
</dbReference>
<dbReference type="Gene3D" id="3.40.50.300">
    <property type="entry name" value="P-loop containing nucleotide triphosphate hydrolases"/>
    <property type="match status" value="1"/>
</dbReference>
<dbReference type="Gene3D" id="1.10.10.10">
    <property type="entry name" value="Winged helix-like DNA-binding domain superfamily/Winged helix DNA-binding domain"/>
    <property type="match status" value="1"/>
</dbReference>
<dbReference type="HAMAP" id="MF_00016">
    <property type="entry name" value="DNA_HJ_migration_RuvB"/>
    <property type="match status" value="1"/>
</dbReference>
<dbReference type="InterPro" id="IPR003593">
    <property type="entry name" value="AAA+_ATPase"/>
</dbReference>
<dbReference type="InterPro" id="IPR041445">
    <property type="entry name" value="AAA_lid_4"/>
</dbReference>
<dbReference type="InterPro" id="IPR004605">
    <property type="entry name" value="DNA_helicase_Holl-junc_RuvB"/>
</dbReference>
<dbReference type="InterPro" id="IPR027417">
    <property type="entry name" value="P-loop_NTPase"/>
</dbReference>
<dbReference type="InterPro" id="IPR008824">
    <property type="entry name" value="RuvB-like_N"/>
</dbReference>
<dbReference type="InterPro" id="IPR008823">
    <property type="entry name" value="RuvB_C"/>
</dbReference>
<dbReference type="InterPro" id="IPR036388">
    <property type="entry name" value="WH-like_DNA-bd_sf"/>
</dbReference>
<dbReference type="InterPro" id="IPR036390">
    <property type="entry name" value="WH_DNA-bd_sf"/>
</dbReference>
<dbReference type="NCBIfam" id="NF000868">
    <property type="entry name" value="PRK00080.1"/>
    <property type="match status" value="1"/>
</dbReference>
<dbReference type="NCBIfam" id="TIGR00635">
    <property type="entry name" value="ruvB"/>
    <property type="match status" value="1"/>
</dbReference>
<dbReference type="PANTHER" id="PTHR42848">
    <property type="match status" value="1"/>
</dbReference>
<dbReference type="PANTHER" id="PTHR42848:SF1">
    <property type="entry name" value="HOLLIDAY JUNCTION BRANCH MIGRATION COMPLEX SUBUNIT RUVB"/>
    <property type="match status" value="1"/>
</dbReference>
<dbReference type="Pfam" id="PF17864">
    <property type="entry name" value="AAA_lid_4"/>
    <property type="match status" value="1"/>
</dbReference>
<dbReference type="Pfam" id="PF05491">
    <property type="entry name" value="RuvB_C"/>
    <property type="match status" value="1"/>
</dbReference>
<dbReference type="Pfam" id="PF05496">
    <property type="entry name" value="RuvB_N"/>
    <property type="match status" value="1"/>
</dbReference>
<dbReference type="SMART" id="SM00382">
    <property type="entry name" value="AAA"/>
    <property type="match status" value="1"/>
</dbReference>
<dbReference type="SUPFAM" id="SSF52540">
    <property type="entry name" value="P-loop containing nucleoside triphosphate hydrolases"/>
    <property type="match status" value="1"/>
</dbReference>
<dbReference type="SUPFAM" id="SSF46785">
    <property type="entry name" value="Winged helix' DNA-binding domain"/>
    <property type="match status" value="1"/>
</dbReference>
<sequence>MSDDFEVVRPEEQAGDEKDRDLRPRSLVDFQGQTKAKENLSVFIKAARERGESLDHLFLIGPPGLGKTTLAQITANELGVDFKVTGAPALDKPKDLAGILTTLTERSVFFIDEIHRLKPAIEEMLYIAMEDYELDWIIGQGPGARTVRIPIPPFTLVGATTRAGMVSSPLISRFGIVQRFEFYSHEELASIISRSASILEIEIEKKAAIALARCSRGTPRVANRLLRRMRDFAQVAGKSSIDEMTVAAGLKQLNIDGLGLETYDRQILRSIIENYSGGPVGAETLAISIGESQDTLEDYYEPYLIQSGLLQRTPRGRMVTLKAYEHLGLNPPKLGDGQEGLFD</sequence>
<reference key="1">
    <citation type="journal article" date="2004" name="Proc. Natl. Acad. Sci. U.S.A.">
        <title>Comparison of the genome of the oral pathogen Treponema denticola with other spirochete genomes.</title>
        <authorList>
            <person name="Seshadri R."/>
            <person name="Myers G.S.A."/>
            <person name="Tettelin H."/>
            <person name="Eisen J.A."/>
            <person name="Heidelberg J.F."/>
            <person name="Dodson R.J."/>
            <person name="Davidsen T.M."/>
            <person name="DeBoy R.T."/>
            <person name="Fouts D.E."/>
            <person name="Haft D.H."/>
            <person name="Selengut J."/>
            <person name="Ren Q."/>
            <person name="Brinkac L.M."/>
            <person name="Madupu R."/>
            <person name="Kolonay J.F."/>
            <person name="Durkin S.A."/>
            <person name="Daugherty S.C."/>
            <person name="Shetty J."/>
            <person name="Shvartsbeyn A."/>
            <person name="Gebregeorgis E."/>
            <person name="Geer K."/>
            <person name="Tsegaye G."/>
            <person name="Malek J.A."/>
            <person name="Ayodeji B."/>
            <person name="Shatsman S."/>
            <person name="McLeod M.P."/>
            <person name="Smajs D."/>
            <person name="Howell J.K."/>
            <person name="Pal S."/>
            <person name="Amin A."/>
            <person name="Vashisth P."/>
            <person name="McNeill T.Z."/>
            <person name="Xiang Q."/>
            <person name="Sodergren E."/>
            <person name="Baca E."/>
            <person name="Weinstock G.M."/>
            <person name="Norris S.J."/>
            <person name="Fraser C.M."/>
            <person name="Paulsen I.T."/>
        </authorList>
    </citation>
    <scope>NUCLEOTIDE SEQUENCE [LARGE SCALE GENOMIC DNA]</scope>
    <source>
        <strain>ATCC 35405 / DSM 14222 / CIP 103919 / JCM 8153 / KCTC 15104</strain>
    </source>
</reference>
<organism>
    <name type="scientific">Treponema denticola (strain ATCC 35405 / DSM 14222 / CIP 103919 / JCM 8153 / KCTC 15104)</name>
    <dbReference type="NCBI Taxonomy" id="243275"/>
    <lineage>
        <taxon>Bacteria</taxon>
        <taxon>Pseudomonadati</taxon>
        <taxon>Spirochaetota</taxon>
        <taxon>Spirochaetia</taxon>
        <taxon>Spirochaetales</taxon>
        <taxon>Treponemataceae</taxon>
        <taxon>Treponema</taxon>
    </lineage>
</organism>
<protein>
    <recommendedName>
        <fullName evidence="1">Holliday junction branch migration complex subunit RuvB</fullName>
        <ecNumber evidence="1">3.6.4.-</ecNumber>
    </recommendedName>
</protein>
<comment type="function">
    <text evidence="1">The RuvA-RuvB-RuvC complex processes Holliday junction (HJ) DNA during genetic recombination and DNA repair, while the RuvA-RuvB complex plays an important role in the rescue of blocked DNA replication forks via replication fork reversal (RFR). RuvA specifically binds to HJ cruciform DNA, conferring on it an open structure. The RuvB hexamer acts as an ATP-dependent pump, pulling dsDNA into and through the RuvAB complex. RuvB forms 2 homohexamers on either side of HJ DNA bound by 1 or 2 RuvA tetramers; 4 subunits per hexamer contact DNA at a time. Coordinated motions by a converter formed by DNA-disengaged RuvB subunits stimulates ATP hydrolysis and nucleotide exchange. Immobilization of the converter enables RuvB to convert the ATP-contained energy into a lever motion, pulling 2 nucleotides of DNA out of the RuvA tetramer per ATP hydrolyzed, thus driving DNA branch migration. The RuvB motors rotate together with the DNA substrate, which together with the progressing nucleotide cycle form the mechanistic basis for DNA recombination by continuous HJ branch migration. Branch migration allows RuvC to scan DNA until it finds its consensus sequence, where it cleaves and resolves cruciform DNA.</text>
</comment>
<comment type="catalytic activity">
    <reaction evidence="1">
        <text>ATP + H2O = ADP + phosphate + H(+)</text>
        <dbReference type="Rhea" id="RHEA:13065"/>
        <dbReference type="ChEBI" id="CHEBI:15377"/>
        <dbReference type="ChEBI" id="CHEBI:15378"/>
        <dbReference type="ChEBI" id="CHEBI:30616"/>
        <dbReference type="ChEBI" id="CHEBI:43474"/>
        <dbReference type="ChEBI" id="CHEBI:456216"/>
    </reaction>
</comment>
<comment type="subunit">
    <text evidence="1">Homohexamer. Forms an RuvA(8)-RuvB(12)-Holliday junction (HJ) complex. HJ DNA is sandwiched between 2 RuvA tetramers; dsDNA enters through RuvA and exits via RuvB. An RuvB hexamer assembles on each DNA strand where it exits the tetramer. Each RuvB hexamer is contacted by two RuvA subunits (via domain III) on 2 adjacent RuvB subunits; this complex drives branch migration. In the full resolvosome a probable DNA-RuvA(4)-RuvB(12)-RuvC(2) complex forms which resolves the HJ.</text>
</comment>
<comment type="subcellular location">
    <subcellularLocation>
        <location evidence="1">Cytoplasm</location>
    </subcellularLocation>
</comment>
<comment type="domain">
    <text evidence="1">Has 3 domains, the large (RuvB-L) and small ATPase (RuvB-S) domains and the C-terminal head (RuvB-H) domain. The head domain binds DNA, while the ATPase domains jointly bind ATP, ADP or are empty depending on the state of the subunit in the translocation cycle. During a single DNA translocation step the structure of each domain remains the same, but their relative positions change.</text>
</comment>
<comment type="similarity">
    <text evidence="1">Belongs to the RuvB family.</text>
</comment>